<dbReference type="EC" id="3.1.-.-" evidence="2"/>
<dbReference type="EMBL" id="L42023">
    <property type="protein sequence ID" value="AAC23310.1"/>
    <property type="status" value="ALT_INIT"/>
    <property type="molecule type" value="Genomic_DNA"/>
</dbReference>
<dbReference type="PIR" id="E64174">
    <property type="entry name" value="E64174"/>
</dbReference>
<dbReference type="RefSeq" id="NP_439806.2">
    <property type="nucleotide sequence ID" value="NC_000907.1"/>
</dbReference>
<dbReference type="SMR" id="P45305"/>
<dbReference type="STRING" id="71421.HI_1664"/>
<dbReference type="EnsemblBacteria" id="AAC23310">
    <property type="protein sequence ID" value="AAC23310"/>
    <property type="gene ID" value="HI_1664"/>
</dbReference>
<dbReference type="KEGG" id="hin:HI_1664"/>
<dbReference type="PATRIC" id="fig|71421.8.peg.1742"/>
<dbReference type="eggNOG" id="COG0084">
    <property type="taxonomic scope" value="Bacteria"/>
</dbReference>
<dbReference type="HOGENOM" id="CLU_031506_5_2_6"/>
<dbReference type="OrthoDB" id="9775608at2"/>
<dbReference type="PhylomeDB" id="P45305"/>
<dbReference type="BioCyc" id="HINF71421:G1GJ1-1681-MONOMER"/>
<dbReference type="Proteomes" id="UP000000579">
    <property type="component" value="Chromosome"/>
</dbReference>
<dbReference type="GO" id="GO:0016788">
    <property type="term" value="F:hydrolase activity, acting on ester bonds"/>
    <property type="evidence" value="ECO:0007669"/>
    <property type="project" value="InterPro"/>
</dbReference>
<dbReference type="GO" id="GO:0046872">
    <property type="term" value="F:metal ion binding"/>
    <property type="evidence" value="ECO:0007669"/>
    <property type="project" value="UniProtKB-KW"/>
</dbReference>
<dbReference type="CDD" id="cd01310">
    <property type="entry name" value="TatD_DNAse"/>
    <property type="match status" value="1"/>
</dbReference>
<dbReference type="Gene3D" id="3.20.20.140">
    <property type="entry name" value="Metal-dependent hydrolases"/>
    <property type="match status" value="1"/>
</dbReference>
<dbReference type="InterPro" id="IPR018228">
    <property type="entry name" value="DNase_TatD-rel_CS"/>
</dbReference>
<dbReference type="InterPro" id="IPR032466">
    <property type="entry name" value="Metal_Hydrolase"/>
</dbReference>
<dbReference type="InterPro" id="IPR001130">
    <property type="entry name" value="TatD-like"/>
</dbReference>
<dbReference type="PANTHER" id="PTHR46317">
    <property type="entry name" value="HYDROLASE OF PHP SUPERFAMILY-RELATED PROTEIN"/>
    <property type="match status" value="1"/>
</dbReference>
<dbReference type="PANTHER" id="PTHR46317:SF1">
    <property type="entry name" value="HYDROLASE, TATD FAMILY"/>
    <property type="match status" value="1"/>
</dbReference>
<dbReference type="Pfam" id="PF01026">
    <property type="entry name" value="TatD_DNase"/>
    <property type="match status" value="1"/>
</dbReference>
<dbReference type="PIRSF" id="PIRSF005902">
    <property type="entry name" value="DNase_TatD"/>
    <property type="match status" value="1"/>
</dbReference>
<dbReference type="SUPFAM" id="SSF51556">
    <property type="entry name" value="Metallo-dependent hydrolases"/>
    <property type="match status" value="1"/>
</dbReference>
<dbReference type="PROSITE" id="PS01137">
    <property type="entry name" value="TATD_1"/>
    <property type="match status" value="1"/>
</dbReference>
<dbReference type="PROSITE" id="PS01091">
    <property type="entry name" value="TATD_3"/>
    <property type="match status" value="1"/>
</dbReference>
<feature type="chain" id="PRO_0000202005" description="Uncharacterized metal-dependent hydrolase HI_1664">
    <location>
        <begin position="1"/>
        <end position="251"/>
    </location>
</feature>
<feature type="binding site" evidence="1">
    <location>
        <position position="6"/>
    </location>
    <ligand>
        <name>a divalent metal cation</name>
        <dbReference type="ChEBI" id="CHEBI:60240"/>
        <label>1</label>
    </ligand>
</feature>
<feature type="binding site" evidence="1">
    <location>
        <position position="8"/>
    </location>
    <ligand>
        <name>a divalent metal cation</name>
        <dbReference type="ChEBI" id="CHEBI:60240"/>
        <label>1</label>
    </ligand>
</feature>
<feature type="binding site" evidence="1">
    <location>
        <position position="90"/>
    </location>
    <ligand>
        <name>a divalent metal cation</name>
        <dbReference type="ChEBI" id="CHEBI:60240"/>
        <label>1</label>
    </ligand>
</feature>
<feature type="binding site" evidence="1">
    <location>
        <position position="90"/>
    </location>
    <ligand>
        <name>a divalent metal cation</name>
        <dbReference type="ChEBI" id="CHEBI:60240"/>
        <label>2</label>
    </ligand>
</feature>
<feature type="binding site" evidence="1">
    <location>
        <position position="130"/>
    </location>
    <ligand>
        <name>a divalent metal cation</name>
        <dbReference type="ChEBI" id="CHEBI:60240"/>
        <label>2</label>
    </ligand>
</feature>
<feature type="binding site" evidence="1">
    <location>
        <position position="154"/>
    </location>
    <ligand>
        <name>a divalent metal cation</name>
        <dbReference type="ChEBI" id="CHEBI:60240"/>
        <label>2</label>
    </ligand>
</feature>
<feature type="binding site" evidence="1">
    <location>
        <position position="202"/>
    </location>
    <ligand>
        <name>a divalent metal cation</name>
        <dbReference type="ChEBI" id="CHEBI:60240"/>
        <label>1</label>
    </ligand>
</feature>
<evidence type="ECO:0000250" key="1">
    <source>
        <dbReference type="UniProtKB" id="P0AFQ7"/>
    </source>
</evidence>
<evidence type="ECO:0000305" key="2"/>
<name>Y1664_HAEIN</name>
<accession>P45305</accession>
<protein>
    <recommendedName>
        <fullName evidence="2">Uncharacterized metal-dependent hydrolase HI_1664</fullName>
        <ecNumber evidence="2">3.1.-.-</ecNumber>
    </recommendedName>
</protein>
<keyword id="KW-0378">Hydrolase</keyword>
<keyword id="KW-0479">Metal-binding</keyword>
<keyword id="KW-1185">Reference proteome</keyword>
<gene>
    <name type="ordered locus">HI_1664</name>
</gene>
<reference key="1">
    <citation type="journal article" date="1995" name="Science">
        <title>Whole-genome random sequencing and assembly of Haemophilus influenzae Rd.</title>
        <authorList>
            <person name="Fleischmann R.D."/>
            <person name="Adams M.D."/>
            <person name="White O."/>
            <person name="Clayton R.A."/>
            <person name="Kirkness E.F."/>
            <person name="Kerlavage A.R."/>
            <person name="Bult C.J."/>
            <person name="Tomb J.-F."/>
            <person name="Dougherty B.A."/>
            <person name="Merrick J.M."/>
            <person name="McKenney K."/>
            <person name="Sutton G.G."/>
            <person name="FitzHugh W."/>
            <person name="Fields C.A."/>
            <person name="Gocayne J.D."/>
            <person name="Scott J.D."/>
            <person name="Shirley R."/>
            <person name="Liu L.-I."/>
            <person name="Glodek A."/>
            <person name="Kelley J.M."/>
            <person name="Weidman J.F."/>
            <person name="Phillips C.A."/>
            <person name="Spriggs T."/>
            <person name="Hedblom E."/>
            <person name="Cotton M.D."/>
            <person name="Utterback T.R."/>
            <person name="Hanna M.C."/>
            <person name="Nguyen D.T."/>
            <person name="Saudek D.M."/>
            <person name="Brandon R.C."/>
            <person name="Fine L.D."/>
            <person name="Fritchman J.L."/>
            <person name="Fuhrmann J.L."/>
            <person name="Geoghagen N.S.M."/>
            <person name="Gnehm C.L."/>
            <person name="McDonald L.A."/>
            <person name="Small K.V."/>
            <person name="Fraser C.M."/>
            <person name="Smith H.O."/>
            <person name="Venter J.C."/>
        </authorList>
    </citation>
    <scope>NUCLEOTIDE SEQUENCE [LARGE SCALE GENOMIC DNA]</scope>
    <source>
        <strain>ATCC 51907 / DSM 11121 / KW20 / Rd</strain>
    </source>
</reference>
<organism>
    <name type="scientific">Haemophilus influenzae (strain ATCC 51907 / DSM 11121 / KW20 / Rd)</name>
    <dbReference type="NCBI Taxonomy" id="71421"/>
    <lineage>
        <taxon>Bacteria</taxon>
        <taxon>Pseudomonadati</taxon>
        <taxon>Pseudomonadota</taxon>
        <taxon>Gammaproteobacteria</taxon>
        <taxon>Pasteurellales</taxon>
        <taxon>Pasteurellaceae</taxon>
        <taxon>Haemophilus</taxon>
    </lineage>
</organism>
<sequence>MLFDSHLHLDQLSDENIQQTLAHSKIIGMLAVSTNLNSAKKLLNLKQTYPKKLYIAAGFHPEQQLPSLEEQKKLFQWIDEHHSSISAIGEVGLPHYSKRENPNLDYVPYIELLERFILIAKKWDLPLNLHIVHNDVEIALELLQKHNIQRAHFHWFKTDEKSFQKFFSTPYFASLTPDILWNSKTQYVAQHLSLNRLMIETDSPWQHEGFERAGISEQLLAVLQKLAELKSLPLHSVQKQILLNTQQFYRL</sequence>
<comment type="cofactor">
    <cofactor evidence="1">
        <name>a divalent metal cation</name>
        <dbReference type="ChEBI" id="CHEBI:60240"/>
    </cofactor>
    <text evidence="1">Binds 2 divalent metal cations per subunit.</text>
</comment>
<comment type="similarity">
    <text evidence="2">Belongs to the metallo-dependent hydrolases superfamily. TatD-type hydrolase family.</text>
</comment>
<comment type="sequence caution" evidence="2">
    <conflict type="erroneous initiation">
        <sequence resource="EMBL-CDS" id="AAC23310"/>
    </conflict>
</comment>
<proteinExistence type="inferred from homology"/>